<accession>Q0CSC0</accession>
<evidence type="ECO:0000250" key="1"/>
<evidence type="ECO:0000255" key="2"/>
<evidence type="ECO:0000256" key="3">
    <source>
        <dbReference type="SAM" id="MobiDB-lite"/>
    </source>
</evidence>
<evidence type="ECO:0000305" key="4"/>
<gene>
    <name type="primary">nma111</name>
    <name type="ORF">ATEG_03414</name>
</gene>
<keyword id="KW-0053">Apoptosis</keyword>
<keyword id="KW-0378">Hydrolase</keyword>
<keyword id="KW-0539">Nucleus</keyword>
<keyword id="KW-0645">Protease</keyword>
<keyword id="KW-1185">Reference proteome</keyword>
<keyword id="KW-0677">Repeat</keyword>
<keyword id="KW-0720">Serine protease</keyword>
<reference key="1">
    <citation type="submission" date="2005-09" db="EMBL/GenBank/DDBJ databases">
        <title>Annotation of the Aspergillus terreus NIH2624 genome.</title>
        <authorList>
            <person name="Birren B.W."/>
            <person name="Lander E.S."/>
            <person name="Galagan J.E."/>
            <person name="Nusbaum C."/>
            <person name="Devon K."/>
            <person name="Henn M."/>
            <person name="Ma L.-J."/>
            <person name="Jaffe D.B."/>
            <person name="Butler J."/>
            <person name="Alvarez P."/>
            <person name="Gnerre S."/>
            <person name="Grabherr M."/>
            <person name="Kleber M."/>
            <person name="Mauceli E.W."/>
            <person name="Brockman W."/>
            <person name="Rounsley S."/>
            <person name="Young S.K."/>
            <person name="LaButti K."/>
            <person name="Pushparaj V."/>
            <person name="DeCaprio D."/>
            <person name="Crawford M."/>
            <person name="Koehrsen M."/>
            <person name="Engels R."/>
            <person name="Montgomery P."/>
            <person name="Pearson M."/>
            <person name="Howarth C."/>
            <person name="Larson L."/>
            <person name="Luoma S."/>
            <person name="White J."/>
            <person name="Alvarado L."/>
            <person name="Kodira C.D."/>
            <person name="Zeng Q."/>
            <person name="Oleary S."/>
            <person name="Yandava C."/>
            <person name="Denning D.W."/>
            <person name="Nierman W.C."/>
            <person name="Milne T."/>
            <person name="Madden K."/>
        </authorList>
    </citation>
    <scope>NUCLEOTIDE SEQUENCE [LARGE SCALE GENOMIC DNA]</scope>
    <source>
        <strain>NIH 2624 / FGSC A1156</strain>
    </source>
</reference>
<protein>
    <recommendedName>
        <fullName>Pro-apoptotic serine protease nma111</fullName>
        <ecNumber>3.4.21.-</ecNumber>
    </recommendedName>
</protein>
<name>NM111_ASPTN</name>
<dbReference type="EC" id="3.4.21.-"/>
<dbReference type="EMBL" id="CH476597">
    <property type="protein sequence ID" value="EAU36688.1"/>
    <property type="status" value="ALT_INIT"/>
    <property type="molecule type" value="Genomic_DNA"/>
</dbReference>
<dbReference type="RefSeq" id="XP_001212592.1">
    <property type="nucleotide sequence ID" value="XM_001212592.1"/>
</dbReference>
<dbReference type="SMR" id="Q0CSC0"/>
<dbReference type="STRING" id="341663.Q0CSC0"/>
<dbReference type="MEROPS" id="S01.434"/>
<dbReference type="EnsemblFungi" id="EAU36688">
    <property type="protein sequence ID" value="EAU36688"/>
    <property type="gene ID" value="ATEG_03414"/>
</dbReference>
<dbReference type="GeneID" id="4317596"/>
<dbReference type="eggNOG" id="KOG1421">
    <property type="taxonomic scope" value="Eukaryota"/>
</dbReference>
<dbReference type="OrthoDB" id="4217619at2759"/>
<dbReference type="Proteomes" id="UP000007963">
    <property type="component" value="Unassembled WGS sequence"/>
</dbReference>
<dbReference type="GO" id="GO:0005634">
    <property type="term" value="C:nucleus"/>
    <property type="evidence" value="ECO:0007669"/>
    <property type="project" value="UniProtKB-SubCell"/>
</dbReference>
<dbReference type="GO" id="GO:0004252">
    <property type="term" value="F:serine-type endopeptidase activity"/>
    <property type="evidence" value="ECO:0007669"/>
    <property type="project" value="InterPro"/>
</dbReference>
<dbReference type="GO" id="GO:0006915">
    <property type="term" value="P:apoptotic process"/>
    <property type="evidence" value="ECO:0007669"/>
    <property type="project" value="UniProtKB-KW"/>
</dbReference>
<dbReference type="GO" id="GO:0006508">
    <property type="term" value="P:proteolysis"/>
    <property type="evidence" value="ECO:0007669"/>
    <property type="project" value="UniProtKB-KW"/>
</dbReference>
<dbReference type="CDD" id="cd06786">
    <property type="entry name" value="cpPDZ1_ScNma111-like"/>
    <property type="match status" value="1"/>
</dbReference>
<dbReference type="CDD" id="cd06719">
    <property type="entry name" value="PDZ2-4_Nma111p-like"/>
    <property type="match status" value="2"/>
</dbReference>
<dbReference type="Gene3D" id="2.30.42.10">
    <property type="match status" value="2"/>
</dbReference>
<dbReference type="Gene3D" id="2.40.10.120">
    <property type="match status" value="2"/>
</dbReference>
<dbReference type="InterPro" id="IPR001478">
    <property type="entry name" value="PDZ"/>
</dbReference>
<dbReference type="InterPro" id="IPR025926">
    <property type="entry name" value="PDZ-like_dom"/>
</dbReference>
<dbReference type="InterPro" id="IPR041489">
    <property type="entry name" value="PDZ_6"/>
</dbReference>
<dbReference type="InterPro" id="IPR036034">
    <property type="entry name" value="PDZ_sf"/>
</dbReference>
<dbReference type="InterPro" id="IPR009003">
    <property type="entry name" value="Peptidase_S1_PA"/>
</dbReference>
<dbReference type="InterPro" id="IPR001940">
    <property type="entry name" value="Peptidase_S1C"/>
</dbReference>
<dbReference type="PANTHER" id="PTHR46366">
    <property type="entry name" value="PRO-APOPTOTIC SERINE PROTEASE NMA111"/>
    <property type="match status" value="1"/>
</dbReference>
<dbReference type="PANTHER" id="PTHR46366:SF8">
    <property type="entry name" value="PRO-APOPTOTIC SERINE PROTEASE NMA111"/>
    <property type="match status" value="1"/>
</dbReference>
<dbReference type="Pfam" id="PF12812">
    <property type="entry name" value="PDZ_1"/>
    <property type="match status" value="2"/>
</dbReference>
<dbReference type="Pfam" id="PF17820">
    <property type="entry name" value="PDZ_6"/>
    <property type="match status" value="1"/>
</dbReference>
<dbReference type="Pfam" id="PF13365">
    <property type="entry name" value="Trypsin_2"/>
    <property type="match status" value="1"/>
</dbReference>
<dbReference type="PRINTS" id="PR00834">
    <property type="entry name" value="PROTEASES2C"/>
</dbReference>
<dbReference type="SMART" id="SM00228">
    <property type="entry name" value="PDZ"/>
    <property type="match status" value="2"/>
</dbReference>
<dbReference type="SUPFAM" id="SSF50156">
    <property type="entry name" value="PDZ domain-like"/>
    <property type="match status" value="3"/>
</dbReference>
<dbReference type="SUPFAM" id="SSF50494">
    <property type="entry name" value="Trypsin-like serine proteases"/>
    <property type="match status" value="2"/>
</dbReference>
<organism>
    <name type="scientific">Aspergillus terreus (strain NIH 2624 / FGSC A1156)</name>
    <dbReference type="NCBI Taxonomy" id="341663"/>
    <lineage>
        <taxon>Eukaryota</taxon>
        <taxon>Fungi</taxon>
        <taxon>Dikarya</taxon>
        <taxon>Ascomycota</taxon>
        <taxon>Pezizomycotina</taxon>
        <taxon>Eurotiomycetes</taxon>
        <taxon>Eurotiomycetidae</taxon>
        <taxon>Eurotiales</taxon>
        <taxon>Aspergillaceae</taxon>
        <taxon>Aspergillus</taxon>
        <taxon>Aspergillus subgen. Circumdati</taxon>
    </lineage>
</organism>
<feature type="chain" id="PRO_0000320348" description="Pro-apoptotic serine protease nma111">
    <location>
        <begin position="1"/>
        <end position="1038"/>
    </location>
</feature>
<feature type="domain" description="PDZ 1">
    <location>
        <begin position="289"/>
        <end position="374"/>
    </location>
</feature>
<feature type="domain" description="PDZ 2">
    <location>
        <begin position="877"/>
        <end position="958"/>
    </location>
</feature>
<feature type="region of interest" description="Disordered" evidence="3">
    <location>
        <begin position="1"/>
        <end position="47"/>
    </location>
</feature>
<feature type="region of interest" description="Serine protease">
    <location>
        <begin position="82"/>
        <end position="275"/>
    </location>
</feature>
<feature type="compositionally biased region" description="Polar residues" evidence="3">
    <location>
        <begin position="30"/>
        <end position="43"/>
    </location>
</feature>
<feature type="active site" description="Charge relay system" evidence="2">
    <location>
        <position position="120"/>
    </location>
</feature>
<feature type="active site" description="Charge relay system" evidence="2">
    <location>
        <position position="151"/>
    </location>
</feature>
<feature type="active site" description="Charge relay system" evidence="2">
    <location>
        <position position="233"/>
    </location>
</feature>
<proteinExistence type="inferred from homology"/>
<comment type="function">
    <text evidence="1">Nuclear serine protease which mediates apoptosis.</text>
</comment>
<comment type="subcellular location">
    <subcellularLocation>
        <location evidence="1">Nucleus</location>
    </subcellularLocation>
</comment>
<comment type="similarity">
    <text evidence="4">Belongs to the peptidase S1C family.</text>
</comment>
<comment type="sequence caution" evidence="4">
    <conflict type="erroneous initiation">
        <sequence resource="EMBL-CDS" id="EAU36688"/>
    </conflict>
</comment>
<sequence>MDLNGDSNAKRKRSSISAAAERPAKHLRPENSSLTPGDTTPANGTVYDVEDDAESSHLIPIAAAPADSPEWQATIEEVVKSVVSIHFCQTCSFDTELSMSSQATGFVVDAERGYILTNRHVVCPGPFWGYVIFDNHEECDVRPVYRDPVHDFGILKFDPKAIRYLKLTELKLQPDAARVGSEIRVVGNDAGEKLSILSGVISRLDRNAPEYGEGYSDFNTNYIQAAAAASGGSSGSPVVNIDGHAIALQAGGRADGAATDYFLPLDRPLRALNCIRRGEPVTRGTIQTQWILKPFDECRRLGLTPEWEAKVRKAAPTETSMLVAEIILPEGPADGKLEEGDVLLQVNGELLTQFIRLDDILDSSVGKTVRLLVQRGGQNVELECEVGDLHAITPDRFVTVAGGTFHDLSYQQARLYAIATRGVYVCEAAGSFKLENTLSGWLIDSVDKRPTRNLEEFVEVMKSIPDRSRVVISYRHIRDLHTRGTSIVYIDRHWHPKMRLAVRNDETGLWDFSDLADPIPALPPVPRKANFIQLDGVSQPAAAEIVRSFVRVSCTMPLKLDGYPQAKKTGFGLVIDAEKGLVVVSRAIVPYDLCDINVTVADSIIVSAKVVFLHPLQNYTIVQYDPSLVQAPVQSARLSTEYIKQGQSTIFVGFNQNFRIVVAKTAVTDITTVSIPANASAPRYRAINLDAITVDTGLSGQCSNGVLVGEDGVVQALWLNYLGERTPSSHKDVEYHLGFATPALLPVASKVQAGEMPKLRILNMESYVVQMSQARIMGVSEEWIQRVTQANPSRHQLFMVRKVDCPPAGFSTTAHDSFQEGDIILTLDGQLITRVSELDIMYDKDVLEALIVRNGQEMKIQVPTVPTEDLETDRAVVFCGAVLQKPHHAVRQQISKLHSEVYVSARSRGSPAYQYGLSPTNFITAVNGVPTPNLDTFVQEVSKIPDNTYFRLRAVTFDNVPWVVTMKKNDHYFPMSEYIKDPAHPAGWKTVSHDKAKHKDGIAPDAANLNPDAMDEGFDDVSELEPEVRLEVGHWTVR</sequence>